<feature type="chain" id="PRO_0000029701" description="Phosphatidylserine decarboxylase beta chain" evidence="1">
    <location>
        <begin position="1"/>
        <end position="251"/>
    </location>
</feature>
<feature type="chain" id="PRO_0000029702" description="Phosphatidylserine decarboxylase alpha chain" evidence="1">
    <location>
        <begin position="252"/>
        <end position="285"/>
    </location>
</feature>
<feature type="active site" description="Charge relay system; for autoendoproteolytic cleavage activity" evidence="1">
    <location>
        <position position="89"/>
    </location>
</feature>
<feature type="active site" description="Charge relay system; for autoendoproteolytic cleavage activity" evidence="1">
    <location>
        <position position="146"/>
    </location>
</feature>
<feature type="active site" description="Charge relay system; for autoendoproteolytic cleavage activity" evidence="1">
    <location>
        <position position="252"/>
    </location>
</feature>
<feature type="active site" description="Schiff-base intermediate with substrate; via pyruvic acid; for decarboxylase activity" evidence="1">
    <location>
        <position position="252"/>
    </location>
</feature>
<feature type="site" description="Cleavage (non-hydrolytic); by autocatalysis" evidence="1">
    <location>
        <begin position="251"/>
        <end position="252"/>
    </location>
</feature>
<feature type="modified residue" description="Pyruvic acid (Ser); by autocatalysis" evidence="1">
    <location>
        <position position="252"/>
    </location>
</feature>
<evidence type="ECO:0000255" key="1">
    <source>
        <dbReference type="HAMAP-Rule" id="MF_00662"/>
    </source>
</evidence>
<sequence length="285" mass="31651">MDKIKVGLQYWIPQHALTRLVGKLASARAGSLTTAIIRWFIKQYNVNMDEALHSDPTHFKTFNEFFVRELKAGVRPIAEGEKVITHPADACVSQFGAIEYGKLIQAKGHTYSAQELLGGDAKLAEEFRDGDFATLYLSPRDYHRVHMPCDGTLRQMIYVPGDLFSVNPLTAENVPNLFARNERVVCIFDTEFGPMAQVLVGATIVGSIELVWAGTVTPPRGNTVYRWDYPANGNQAVVLKKGEEMGRFKLGSTVINLFAKQAIRFDDSMALGAPTRMGEPYAHQA</sequence>
<reference key="1">
    <citation type="journal article" date="2000" name="Nature">
        <title>DNA sequence of both chromosomes of the cholera pathogen Vibrio cholerae.</title>
        <authorList>
            <person name="Heidelberg J.F."/>
            <person name="Eisen J.A."/>
            <person name="Nelson W.C."/>
            <person name="Clayton R.A."/>
            <person name="Gwinn M.L."/>
            <person name="Dodson R.J."/>
            <person name="Haft D.H."/>
            <person name="Hickey E.K."/>
            <person name="Peterson J.D."/>
            <person name="Umayam L.A."/>
            <person name="Gill S.R."/>
            <person name="Nelson K.E."/>
            <person name="Read T.D."/>
            <person name="Tettelin H."/>
            <person name="Richardson D.L."/>
            <person name="Ermolaeva M.D."/>
            <person name="Vamathevan J.J."/>
            <person name="Bass S."/>
            <person name="Qin H."/>
            <person name="Dragoi I."/>
            <person name="Sellers P."/>
            <person name="McDonald L.A."/>
            <person name="Utterback T.R."/>
            <person name="Fleischmann R.D."/>
            <person name="Nierman W.C."/>
            <person name="White O."/>
            <person name="Salzberg S.L."/>
            <person name="Smith H.O."/>
            <person name="Colwell R.R."/>
            <person name="Mekalanos J.J."/>
            <person name="Venter J.C."/>
            <person name="Fraser C.M."/>
        </authorList>
    </citation>
    <scope>NUCLEOTIDE SEQUENCE [LARGE SCALE GENOMIC DNA]</scope>
    <source>
        <strain>ATCC 39315 / El Tor Inaba N16961</strain>
    </source>
</reference>
<organism>
    <name type="scientific">Vibrio cholerae serotype O1 (strain ATCC 39315 / El Tor Inaba N16961)</name>
    <dbReference type="NCBI Taxonomy" id="243277"/>
    <lineage>
        <taxon>Bacteria</taxon>
        <taxon>Pseudomonadati</taxon>
        <taxon>Pseudomonadota</taxon>
        <taxon>Gammaproteobacteria</taxon>
        <taxon>Vibrionales</taxon>
        <taxon>Vibrionaceae</taxon>
        <taxon>Vibrio</taxon>
    </lineage>
</organism>
<protein>
    <recommendedName>
        <fullName evidence="1">Phosphatidylserine decarboxylase proenzyme</fullName>
        <ecNumber evidence="1">4.1.1.65</ecNumber>
    </recommendedName>
    <component>
        <recommendedName>
            <fullName evidence="1">Phosphatidylserine decarboxylase alpha chain</fullName>
        </recommendedName>
    </component>
    <component>
        <recommendedName>
            <fullName evidence="1">Phosphatidylserine decarboxylase beta chain</fullName>
        </recommendedName>
    </component>
</protein>
<dbReference type="EC" id="4.1.1.65" evidence="1"/>
<dbReference type="EMBL" id="AE003852">
    <property type="protein sequence ID" value="AAF93512.1"/>
    <property type="molecule type" value="Genomic_DNA"/>
</dbReference>
<dbReference type="PIR" id="B82336">
    <property type="entry name" value="B82336"/>
</dbReference>
<dbReference type="RefSeq" id="NP_229993.1">
    <property type="nucleotide sequence ID" value="NC_002505.1"/>
</dbReference>
<dbReference type="SMR" id="Q9KV19"/>
<dbReference type="STRING" id="243277.VC_0339"/>
<dbReference type="DNASU" id="2615075"/>
<dbReference type="EnsemblBacteria" id="AAF93512">
    <property type="protein sequence ID" value="AAF93512"/>
    <property type="gene ID" value="VC_0339"/>
</dbReference>
<dbReference type="KEGG" id="vch:VC_0339"/>
<dbReference type="PATRIC" id="fig|243277.26.peg.316"/>
<dbReference type="eggNOG" id="COG0688">
    <property type="taxonomic scope" value="Bacteria"/>
</dbReference>
<dbReference type="HOGENOM" id="CLU_029061_4_1_6"/>
<dbReference type="UniPathway" id="UPA00558">
    <property type="reaction ID" value="UER00616"/>
</dbReference>
<dbReference type="Proteomes" id="UP000000584">
    <property type="component" value="Chromosome 1"/>
</dbReference>
<dbReference type="GO" id="GO:0005886">
    <property type="term" value="C:plasma membrane"/>
    <property type="evidence" value="ECO:0007669"/>
    <property type="project" value="UniProtKB-SubCell"/>
</dbReference>
<dbReference type="GO" id="GO:0004609">
    <property type="term" value="F:phosphatidylserine decarboxylase activity"/>
    <property type="evidence" value="ECO:0000318"/>
    <property type="project" value="GO_Central"/>
</dbReference>
<dbReference type="GO" id="GO:0006646">
    <property type="term" value="P:phosphatidylethanolamine biosynthetic process"/>
    <property type="evidence" value="ECO:0000318"/>
    <property type="project" value="GO_Central"/>
</dbReference>
<dbReference type="HAMAP" id="MF_00662">
    <property type="entry name" value="PS_decarb_PSD_B_type1"/>
    <property type="match status" value="1"/>
</dbReference>
<dbReference type="InterPro" id="IPR003817">
    <property type="entry name" value="PS_Dcarbxylase"/>
</dbReference>
<dbReference type="InterPro" id="IPR033177">
    <property type="entry name" value="PSD-B"/>
</dbReference>
<dbReference type="InterPro" id="IPR033178">
    <property type="entry name" value="PSD_type1_pro"/>
</dbReference>
<dbReference type="NCBIfam" id="TIGR00163">
    <property type="entry name" value="PS_decarb"/>
    <property type="match status" value="1"/>
</dbReference>
<dbReference type="PANTHER" id="PTHR10067">
    <property type="entry name" value="PHOSPHATIDYLSERINE DECARBOXYLASE"/>
    <property type="match status" value="1"/>
</dbReference>
<dbReference type="PANTHER" id="PTHR10067:SF6">
    <property type="entry name" value="PHOSPHATIDYLSERINE DECARBOXYLASE PROENZYME, MITOCHONDRIAL"/>
    <property type="match status" value="1"/>
</dbReference>
<dbReference type="Pfam" id="PF02666">
    <property type="entry name" value="PS_Dcarbxylase"/>
    <property type="match status" value="1"/>
</dbReference>
<proteinExistence type="inferred from homology"/>
<accession>Q9KV19</accession>
<comment type="function">
    <text evidence="1">Catalyzes the formation of phosphatidylethanolamine (PtdEtn) from phosphatidylserine (PtdSer).</text>
</comment>
<comment type="catalytic activity">
    <reaction evidence="1">
        <text>a 1,2-diacyl-sn-glycero-3-phospho-L-serine + H(+) = a 1,2-diacyl-sn-glycero-3-phosphoethanolamine + CO2</text>
        <dbReference type="Rhea" id="RHEA:20828"/>
        <dbReference type="ChEBI" id="CHEBI:15378"/>
        <dbReference type="ChEBI" id="CHEBI:16526"/>
        <dbReference type="ChEBI" id="CHEBI:57262"/>
        <dbReference type="ChEBI" id="CHEBI:64612"/>
        <dbReference type="EC" id="4.1.1.65"/>
    </reaction>
</comment>
<comment type="cofactor">
    <cofactor evidence="1">
        <name>pyruvate</name>
        <dbReference type="ChEBI" id="CHEBI:15361"/>
    </cofactor>
    <text evidence="1">Binds 1 pyruvoyl group covalently per subunit.</text>
</comment>
<comment type="pathway">
    <text evidence="1">Phospholipid metabolism; phosphatidylethanolamine biosynthesis; phosphatidylethanolamine from CDP-diacylglycerol: step 2/2.</text>
</comment>
<comment type="subunit">
    <text evidence="1">Heterodimer of a large membrane-associated beta subunit and a small pyruvoyl-containing alpha subunit.</text>
</comment>
<comment type="subcellular location">
    <subcellularLocation>
        <location evidence="1">Cell membrane</location>
        <topology evidence="1">Peripheral membrane protein</topology>
    </subcellularLocation>
</comment>
<comment type="PTM">
    <text evidence="1">Is synthesized initially as an inactive proenzyme. Formation of the active enzyme involves a self-maturation process in which the active site pyruvoyl group is generated from an internal serine residue via an autocatalytic post-translational modification. Two non-identical subunits are generated from the proenzyme in this reaction, and the pyruvate is formed at the N-terminus of the alpha chain, which is derived from the carboxyl end of the proenzyme. The autoendoproteolytic cleavage occurs by a canonical serine protease mechanism, in which the side chain hydroxyl group of the serine supplies its oxygen atom to form the C-terminus of the beta chain, while the remainder of the serine residue undergoes an oxidative deamination to produce ammonia and the pyruvoyl prosthetic group on the alpha chain. During this reaction, the Ser that is part of the protease active site of the proenzyme becomes the pyruvoyl prosthetic group, which constitutes an essential element of the active site of the mature decarboxylase.</text>
</comment>
<comment type="similarity">
    <text evidence="1">Belongs to the phosphatidylserine decarboxylase family. PSD-B subfamily. Prokaryotic type I sub-subfamily.</text>
</comment>
<gene>
    <name evidence="1" type="primary">psd</name>
    <name type="ordered locus">VC_0339</name>
</gene>
<name>PSD_VIBCH</name>
<keyword id="KW-1003">Cell membrane</keyword>
<keyword id="KW-0210">Decarboxylase</keyword>
<keyword id="KW-0444">Lipid biosynthesis</keyword>
<keyword id="KW-0443">Lipid metabolism</keyword>
<keyword id="KW-0456">Lyase</keyword>
<keyword id="KW-0472">Membrane</keyword>
<keyword id="KW-0594">Phospholipid biosynthesis</keyword>
<keyword id="KW-1208">Phospholipid metabolism</keyword>
<keyword id="KW-0670">Pyruvate</keyword>
<keyword id="KW-1185">Reference proteome</keyword>
<keyword id="KW-0865">Zymogen</keyword>